<protein>
    <recommendedName>
        <fullName>Early 53 kDa protein</fullName>
    </recommendedName>
    <alternativeName>
        <fullName>ME-53</fullName>
    </alternativeName>
</protein>
<name>ME53_NPVAC</name>
<organism>
    <name type="scientific">Autographa californica nuclear polyhedrosis virus</name>
    <name type="common">AcMNPV</name>
    <dbReference type="NCBI Taxonomy" id="46015"/>
    <lineage>
        <taxon>Viruses</taxon>
        <taxon>Viruses incertae sedis</taxon>
        <taxon>Naldaviricetes</taxon>
        <taxon>Lefavirales</taxon>
        <taxon>Baculoviridae</taxon>
        <taxon>Alphabaculovirus</taxon>
        <taxon>Alphabaculovirus aucalifornicae</taxon>
    </lineage>
</organism>
<gene>
    <name type="primary">ME53</name>
</gene>
<sequence length="449" mass="52636">MNRFFRENNIFDAPRTGGKGRAKSLPAPAANSPPSPVRPPPKSNIKPPTRISPPKQPMCTSPAKPLEHSSIVSKKPVVNRKDGYFVPPEFGNKFEGLPAYSDKLDFKQERDLRMHFMSDLERDIMKATLKFSTNYIMGYINSKDMRMTGKFASRPVKYKKTMEHMSDSRCTTCNYRFKDNTREWFLYVVVHIEKPLDDPDRIDICCQKCYLYHNVPKTSYEIYPSINLVDLSYLARERFFYQYIFPVSLEHTTEVKELRIDDHNCKVFEIIRRIIRNHKEPNERIQTIDLSTTGGLVLRETYTNIVLQRYRSMCTRPDVVDDVNCFILQEPSEMMAALQDNRFSGIKGTVFATVKVKKFTQVLDGAITFPLKPTTNNYCKLCKKTKLYYKNPVLYCTKCGFTNVYHFPEYSKFMYYFEAIKSFEMHNEMIIYYDLKMYKKLINIVNNNV</sequence>
<reference key="1">
    <citation type="journal article" date="1993" name="J. Virol.">
        <title>Baculovirus gene ME53, which contains a putative zinc finger motif, is one of the major early-transcribed genes.</title>
        <authorList>
            <person name="Knebel-Moersdorf D."/>
            <person name="Kremer A."/>
            <person name="Jahnel F."/>
        </authorList>
    </citation>
    <scope>NUCLEOTIDE SEQUENCE [GENOMIC DNA]</scope>
    <source>
        <strain>E</strain>
    </source>
</reference>
<reference key="2">
    <citation type="journal article" date="1994" name="Virology">
        <title>The complete DNA sequence of Autographa californica nuclear polyhedrosis virus.</title>
        <authorList>
            <person name="Ayres M.D."/>
            <person name="Howard S.C."/>
            <person name="Kuzio J."/>
            <person name="Lopez-Ferber M."/>
            <person name="Possee R.D."/>
        </authorList>
    </citation>
    <scope>NUCLEOTIDE SEQUENCE [LARGE SCALE GENOMIC DNA]</scope>
    <source>
        <strain>C6</strain>
    </source>
</reference>
<reference key="3">
    <citation type="journal article" date="2009" name="J. Virol.">
        <title>Autographa californica multiple nucleopolyhedrovirus me53 (ac140) is a nonessential gene required for efficient budded-virus production.</title>
        <authorList>
            <person name="de Jong J."/>
            <person name="Arif B.M."/>
            <person name="Theilmann D.A."/>
            <person name="Krell P.J."/>
        </authorList>
    </citation>
    <scope>SUBCELLULAR LOCATION</scope>
</reference>
<reference key="4">
    <citation type="journal article" date="2011" name="J. Virol.">
        <title>Immediate-early protein ME53 forms foci and colocalizes with GP64 and the major capsid protein VP39 at the cell membranes of Autographa californica multiple nucleopolyhedrovirus-infected cells.</title>
        <authorList>
            <person name="de Jong J."/>
            <person name="Theilmann D.A."/>
            <person name="Arif B.M."/>
            <person name="Krell P.J."/>
        </authorList>
    </citation>
    <scope>SUBCELLULAR LOCATION</scope>
</reference>
<reference key="5">
    <citation type="journal article" date="2016" name="J. Virol.">
        <title>Nuclear Translocation Sequence and Region in Autographa californica Multiple Nucleopolyhedrovirus ME53 That Are Important for Optimal Baculovirus Production.</title>
        <authorList>
            <person name="Liu Y."/>
            <person name="de Jong J."/>
            <person name="Nagy E."/>
            <person name="Theilmann D.A."/>
            <person name="Krell P.J."/>
        </authorList>
    </citation>
    <scope>FUNCTION</scope>
</reference>
<comment type="function">
    <text evidence="5">May act as a packaging protein or as a structural component associated with intranuclear baculovirus virion assembly.</text>
</comment>
<comment type="subcellular location">
    <subcellularLocation>
        <location evidence="3">Virion</location>
    </subcellularLocation>
    <subcellularLocation>
        <location evidence="3 4">Host cytoplasm</location>
    </subcellularLocation>
    <subcellularLocation>
        <location evidence="3 4">Host nucleus</location>
    </subcellularLocation>
    <subcellularLocation>
        <location evidence="4">Host cell membrane</location>
    </subcellularLocation>
    <text evidence="4">Colocalizes with protein GP64.</text>
</comment>
<organismHost>
    <name type="scientific">Lepidoptera</name>
    <name type="common">butterflies and moths</name>
    <dbReference type="NCBI Taxonomy" id="7088"/>
</organismHost>
<evidence type="ECO:0000255" key="1"/>
<evidence type="ECO:0000256" key="2">
    <source>
        <dbReference type="SAM" id="MobiDB-lite"/>
    </source>
</evidence>
<evidence type="ECO:0000269" key="3">
    <source>
    </source>
</evidence>
<evidence type="ECO:0000269" key="4">
    <source>
    </source>
</evidence>
<evidence type="ECO:0000269" key="5">
    <source>
    </source>
</evidence>
<evidence type="ECO:0000305" key="6"/>
<proteinExistence type="predicted"/>
<accession>Q04719</accession>
<dbReference type="EMBL" id="L05914">
    <property type="protein sequence ID" value="AAA46718.1"/>
    <property type="molecule type" value="Genomic_DNA"/>
</dbReference>
<dbReference type="EMBL" id="L22858">
    <property type="protein sequence ID" value="AAA66769.1"/>
    <property type="molecule type" value="Genomic_DNA"/>
</dbReference>
<dbReference type="PIR" id="A45709">
    <property type="entry name" value="A45709"/>
</dbReference>
<dbReference type="KEGG" id="vg:1403972"/>
<dbReference type="OrthoDB" id="2566at10239"/>
<dbReference type="Proteomes" id="UP000008292">
    <property type="component" value="Segment"/>
</dbReference>
<dbReference type="GO" id="GO:0030430">
    <property type="term" value="C:host cell cytoplasm"/>
    <property type="evidence" value="ECO:0007669"/>
    <property type="project" value="UniProtKB-SubCell"/>
</dbReference>
<dbReference type="GO" id="GO:0042025">
    <property type="term" value="C:host cell nucleus"/>
    <property type="evidence" value="ECO:0007669"/>
    <property type="project" value="UniProtKB-SubCell"/>
</dbReference>
<dbReference type="GO" id="GO:0020002">
    <property type="term" value="C:host cell plasma membrane"/>
    <property type="evidence" value="ECO:0007669"/>
    <property type="project" value="UniProtKB-SubCell"/>
</dbReference>
<dbReference type="GO" id="GO:0016020">
    <property type="term" value="C:membrane"/>
    <property type="evidence" value="ECO:0007669"/>
    <property type="project" value="UniProtKB-KW"/>
</dbReference>
<dbReference type="GO" id="GO:0044423">
    <property type="term" value="C:virion component"/>
    <property type="evidence" value="ECO:0007669"/>
    <property type="project" value="UniProtKB-KW"/>
</dbReference>
<dbReference type="GO" id="GO:0003677">
    <property type="term" value="F:DNA binding"/>
    <property type="evidence" value="ECO:0007669"/>
    <property type="project" value="UniProtKB-KW"/>
</dbReference>
<dbReference type="GO" id="GO:0008270">
    <property type="term" value="F:zinc ion binding"/>
    <property type="evidence" value="ECO:0007669"/>
    <property type="project" value="UniProtKB-KW"/>
</dbReference>
<dbReference type="InterPro" id="IPR010336">
    <property type="entry name" value="Baculo_ME53"/>
</dbReference>
<dbReference type="Pfam" id="PF06061">
    <property type="entry name" value="Baculo_ME53"/>
    <property type="match status" value="1"/>
</dbReference>
<feature type="chain" id="PRO_0000132844" description="Early 53 kDa protein">
    <location>
        <begin position="1"/>
        <end position="449"/>
    </location>
</feature>
<feature type="zinc finger region" description="C4-type" evidence="1">
    <location>
        <begin position="379"/>
        <end position="399"/>
    </location>
</feature>
<feature type="region of interest" description="Disordered" evidence="2">
    <location>
        <begin position="1"/>
        <end position="68"/>
    </location>
</feature>
<feature type="compositionally biased region" description="Pro residues" evidence="2">
    <location>
        <begin position="31"/>
        <end position="42"/>
    </location>
</feature>
<feature type="sequence conflict" description="In Ref. 1; AAA46718." evidence="6" ref="1">
    <original>MC</original>
    <variation>TR</variation>
    <location>
        <begin position="58"/>
        <end position="59"/>
    </location>
</feature>
<keyword id="KW-0238">DNA-binding</keyword>
<keyword id="KW-0244">Early protein</keyword>
<keyword id="KW-1032">Host cell membrane</keyword>
<keyword id="KW-1035">Host cytoplasm</keyword>
<keyword id="KW-1043">Host membrane</keyword>
<keyword id="KW-1048">Host nucleus</keyword>
<keyword id="KW-0472">Membrane</keyword>
<keyword id="KW-0479">Metal-binding</keyword>
<keyword id="KW-1185">Reference proteome</keyword>
<keyword id="KW-0946">Virion</keyword>
<keyword id="KW-0862">Zinc</keyword>
<keyword id="KW-0863">Zinc-finger</keyword>